<name>YTR1_AZOBR</name>
<reference key="1">
    <citation type="journal article" date="1991" name="Mol. Gen. Genet.">
        <title>Relationship between tryptophan biosynthesis and indole-3-acetic acid production in Azospirillum: identification and sequencing of a trpGDC cluster.</title>
        <authorList>
            <person name="Zimmer W."/>
            <person name="Aparicio C."/>
            <person name="Elmerich C."/>
        </authorList>
    </citation>
    <scope>NUCLEOTIDE SEQUENCE [GENOMIC DNA]</scope>
    <source>
        <strain>ATCC 29145 / DSM 1690 / IMET 11303 / Sp7</strain>
    </source>
</reference>
<proteinExistence type="predicted"/>
<dbReference type="EMBL" id="X57853">
    <property type="protein sequence ID" value="CAA40983.1"/>
    <property type="molecule type" value="Genomic_DNA"/>
</dbReference>
<dbReference type="PIR" id="S17702">
    <property type="entry name" value="S17702"/>
</dbReference>
<dbReference type="RefSeq" id="WP_059398732.1">
    <property type="nucleotide sequence ID" value="NZ_CP012914.1"/>
</dbReference>
<dbReference type="GeneID" id="56448391"/>
<dbReference type="InterPro" id="IPR049973">
    <property type="entry name" value="STY0301-like"/>
</dbReference>
<dbReference type="NCBIfam" id="NF042415">
    <property type="entry name" value="STY0301_fam"/>
    <property type="match status" value="1"/>
</dbReference>
<organism>
    <name type="scientific">Azospirillum brasilense</name>
    <dbReference type="NCBI Taxonomy" id="192"/>
    <lineage>
        <taxon>Bacteria</taxon>
        <taxon>Pseudomonadati</taxon>
        <taxon>Pseudomonadota</taxon>
        <taxon>Alphaproteobacteria</taxon>
        <taxon>Rhodospirillales</taxon>
        <taxon>Azospirillaceae</taxon>
        <taxon>Azospirillum</taxon>
    </lineage>
</organism>
<feature type="chain" id="PRO_0000066530" description="Uncharacterized 16.3 kDa protein in trpG 5'region">
    <location>
        <begin position="1"/>
        <end position="150"/>
    </location>
</feature>
<protein>
    <recommendedName>
        <fullName>Uncharacterized 16.3 kDa protein in trpG 5'region</fullName>
    </recommendedName>
    <alternativeName>
        <fullName>ORF1</fullName>
    </alternativeName>
</protein>
<accession>P26943</accession>
<sequence length="150" mass="16323">MLRTLILLTLLITATAGPALANEVRCPASLTVQAQPEAPGGWSPYPAKDQHAFAGVTLVEGDRAAQMAAPAPAALEPDRSLRRGRSEIRQWDFPAARRDNVFLICRYAGTQATLAIDLPRTVRRCQITEETDARGMVLDKPATAPQFLCR</sequence>